<accession>Q3IH16</accession>
<protein>
    <recommendedName>
        <fullName evidence="1">tRNA-specific 2-thiouridylase MnmA</fullName>
        <ecNumber evidence="1">2.8.1.13</ecNumber>
    </recommendedName>
</protein>
<feature type="chain" id="PRO_1000009555" description="tRNA-specific 2-thiouridylase MnmA">
    <location>
        <begin position="1"/>
        <end position="366"/>
    </location>
</feature>
<feature type="region of interest" description="Interaction with target base in tRNA" evidence="1">
    <location>
        <begin position="98"/>
        <end position="100"/>
    </location>
</feature>
<feature type="region of interest" description="Interaction with tRNA" evidence="1">
    <location>
        <begin position="150"/>
        <end position="152"/>
    </location>
</feature>
<feature type="region of interest" description="Interaction with tRNA" evidence="1">
    <location>
        <begin position="312"/>
        <end position="313"/>
    </location>
</feature>
<feature type="active site" description="Nucleophile" evidence="1">
    <location>
        <position position="103"/>
    </location>
</feature>
<feature type="active site" description="Cysteine persulfide intermediate" evidence="1">
    <location>
        <position position="200"/>
    </location>
</feature>
<feature type="binding site" evidence="1">
    <location>
        <begin position="12"/>
        <end position="19"/>
    </location>
    <ligand>
        <name>ATP</name>
        <dbReference type="ChEBI" id="CHEBI:30616"/>
    </ligand>
</feature>
<feature type="binding site" evidence="1">
    <location>
        <position position="38"/>
    </location>
    <ligand>
        <name>ATP</name>
        <dbReference type="ChEBI" id="CHEBI:30616"/>
    </ligand>
</feature>
<feature type="binding site" evidence="1">
    <location>
        <position position="128"/>
    </location>
    <ligand>
        <name>ATP</name>
        <dbReference type="ChEBI" id="CHEBI:30616"/>
    </ligand>
</feature>
<feature type="site" description="Interaction with tRNA" evidence="1">
    <location>
        <position position="129"/>
    </location>
</feature>
<feature type="site" description="Interaction with tRNA" evidence="1">
    <location>
        <position position="345"/>
    </location>
</feature>
<feature type="disulfide bond" description="Alternate" evidence="1">
    <location>
        <begin position="103"/>
        <end position="200"/>
    </location>
</feature>
<dbReference type="EC" id="2.8.1.13" evidence="1"/>
<dbReference type="EMBL" id="CR954246">
    <property type="protein sequence ID" value="CAI86763.1"/>
    <property type="molecule type" value="Genomic_DNA"/>
</dbReference>
<dbReference type="SMR" id="Q3IH16"/>
<dbReference type="STRING" id="326442.PSHAa1690"/>
<dbReference type="KEGG" id="pha:PSHAa1690"/>
<dbReference type="PATRIC" id="fig|326442.8.peg.1635"/>
<dbReference type="eggNOG" id="COG0482">
    <property type="taxonomic scope" value="Bacteria"/>
</dbReference>
<dbReference type="HOGENOM" id="CLU_035188_1_0_6"/>
<dbReference type="BioCyc" id="PHAL326442:PSHA_RS08290-MONOMER"/>
<dbReference type="Proteomes" id="UP000006843">
    <property type="component" value="Chromosome I"/>
</dbReference>
<dbReference type="GO" id="GO:0005737">
    <property type="term" value="C:cytoplasm"/>
    <property type="evidence" value="ECO:0007669"/>
    <property type="project" value="UniProtKB-SubCell"/>
</dbReference>
<dbReference type="GO" id="GO:0005524">
    <property type="term" value="F:ATP binding"/>
    <property type="evidence" value="ECO:0007669"/>
    <property type="project" value="UniProtKB-KW"/>
</dbReference>
<dbReference type="GO" id="GO:0000049">
    <property type="term" value="F:tRNA binding"/>
    <property type="evidence" value="ECO:0007669"/>
    <property type="project" value="UniProtKB-KW"/>
</dbReference>
<dbReference type="GO" id="GO:0103016">
    <property type="term" value="F:tRNA-uridine 2-sulfurtransferase activity"/>
    <property type="evidence" value="ECO:0007669"/>
    <property type="project" value="UniProtKB-EC"/>
</dbReference>
<dbReference type="GO" id="GO:0002143">
    <property type="term" value="P:tRNA wobble position uridine thiolation"/>
    <property type="evidence" value="ECO:0007669"/>
    <property type="project" value="TreeGrafter"/>
</dbReference>
<dbReference type="CDD" id="cd01998">
    <property type="entry name" value="MnmA_TRMU-like"/>
    <property type="match status" value="1"/>
</dbReference>
<dbReference type="FunFam" id="2.30.30.280:FF:000001">
    <property type="entry name" value="tRNA-specific 2-thiouridylase MnmA"/>
    <property type="match status" value="1"/>
</dbReference>
<dbReference type="FunFam" id="2.40.30.10:FF:000023">
    <property type="entry name" value="tRNA-specific 2-thiouridylase MnmA"/>
    <property type="match status" value="1"/>
</dbReference>
<dbReference type="FunFam" id="3.40.50.620:FF:000004">
    <property type="entry name" value="tRNA-specific 2-thiouridylase MnmA"/>
    <property type="match status" value="1"/>
</dbReference>
<dbReference type="Gene3D" id="2.30.30.280">
    <property type="entry name" value="Adenine nucleotide alpha hydrolases-like domains"/>
    <property type="match status" value="1"/>
</dbReference>
<dbReference type="Gene3D" id="3.40.50.620">
    <property type="entry name" value="HUPs"/>
    <property type="match status" value="1"/>
</dbReference>
<dbReference type="Gene3D" id="2.40.30.10">
    <property type="entry name" value="Translation factors"/>
    <property type="match status" value="1"/>
</dbReference>
<dbReference type="HAMAP" id="MF_00144">
    <property type="entry name" value="tRNA_thiouridyl_MnmA"/>
    <property type="match status" value="1"/>
</dbReference>
<dbReference type="InterPro" id="IPR004506">
    <property type="entry name" value="MnmA-like"/>
</dbReference>
<dbReference type="InterPro" id="IPR046885">
    <property type="entry name" value="MnmA-like_C"/>
</dbReference>
<dbReference type="InterPro" id="IPR046884">
    <property type="entry name" value="MnmA-like_central"/>
</dbReference>
<dbReference type="InterPro" id="IPR023382">
    <property type="entry name" value="MnmA-like_central_sf"/>
</dbReference>
<dbReference type="InterPro" id="IPR014729">
    <property type="entry name" value="Rossmann-like_a/b/a_fold"/>
</dbReference>
<dbReference type="NCBIfam" id="NF001138">
    <property type="entry name" value="PRK00143.1"/>
    <property type="match status" value="1"/>
</dbReference>
<dbReference type="NCBIfam" id="TIGR00420">
    <property type="entry name" value="trmU"/>
    <property type="match status" value="1"/>
</dbReference>
<dbReference type="PANTHER" id="PTHR11933:SF5">
    <property type="entry name" value="MITOCHONDRIAL TRNA-SPECIFIC 2-THIOURIDYLASE 1"/>
    <property type="match status" value="1"/>
</dbReference>
<dbReference type="PANTHER" id="PTHR11933">
    <property type="entry name" value="TRNA 5-METHYLAMINOMETHYL-2-THIOURIDYLATE -METHYLTRANSFERASE"/>
    <property type="match status" value="1"/>
</dbReference>
<dbReference type="Pfam" id="PF03054">
    <property type="entry name" value="tRNA_Me_trans"/>
    <property type="match status" value="1"/>
</dbReference>
<dbReference type="Pfam" id="PF20258">
    <property type="entry name" value="tRNA_Me_trans_C"/>
    <property type="match status" value="1"/>
</dbReference>
<dbReference type="Pfam" id="PF20259">
    <property type="entry name" value="tRNA_Me_trans_M"/>
    <property type="match status" value="1"/>
</dbReference>
<dbReference type="SUPFAM" id="SSF52402">
    <property type="entry name" value="Adenine nucleotide alpha hydrolases-like"/>
    <property type="match status" value="1"/>
</dbReference>
<sequence length="366" mass="41073">MSENSHIKVIVGMSGGVDSSVSAYLLKQQGYQVEGLFMKNWEEDDNDEYCAAADDLKDAQAVCDKLGIELHTVNFAAEYWDNVFEYFLAEYKAGRTPNPDIMCNKEIKFKAFLEFAAQALGADFIATGHYVRRELRDDKYVMCRGLDDNKDQSYFLYTLSHEHIGQTLFPVGDIAKPEVRRIAEEQDLITHDKKDSTGICFIGERKFKDFLQKFLPAQPGVIEDTDGNNVGEHEGLMYHTLGQRKGLLIGGMKEGSGEPWYVVDKDLERNVLIVGQGKDHPRLYSNGLNANQLHWVDRIGPKGTTRCTVKTRYRQEDLSCTLLVGEDGMARVLFDEPQKAVTPGQSAVFYAEDVCLGGGIIDSVIK</sequence>
<name>MNMA_PSET1</name>
<reference key="1">
    <citation type="journal article" date="2005" name="Genome Res.">
        <title>Coping with cold: the genome of the versatile marine Antarctica bacterium Pseudoalteromonas haloplanktis TAC125.</title>
        <authorList>
            <person name="Medigue C."/>
            <person name="Krin E."/>
            <person name="Pascal G."/>
            <person name="Barbe V."/>
            <person name="Bernsel A."/>
            <person name="Bertin P.N."/>
            <person name="Cheung F."/>
            <person name="Cruveiller S."/>
            <person name="D'Amico S."/>
            <person name="Duilio A."/>
            <person name="Fang G."/>
            <person name="Feller G."/>
            <person name="Ho C."/>
            <person name="Mangenot S."/>
            <person name="Marino G."/>
            <person name="Nilsson J."/>
            <person name="Parrilli E."/>
            <person name="Rocha E.P.C."/>
            <person name="Rouy Z."/>
            <person name="Sekowska A."/>
            <person name="Tutino M.L."/>
            <person name="Vallenet D."/>
            <person name="von Heijne G."/>
            <person name="Danchin A."/>
        </authorList>
    </citation>
    <scope>NUCLEOTIDE SEQUENCE [LARGE SCALE GENOMIC DNA]</scope>
    <source>
        <strain>TAC 125</strain>
    </source>
</reference>
<evidence type="ECO:0000255" key="1">
    <source>
        <dbReference type="HAMAP-Rule" id="MF_00144"/>
    </source>
</evidence>
<comment type="function">
    <text evidence="1">Catalyzes the 2-thiolation of uridine at the wobble position (U34) of tRNA, leading to the formation of s(2)U34.</text>
</comment>
<comment type="catalytic activity">
    <reaction evidence="1">
        <text>S-sulfanyl-L-cysteinyl-[protein] + uridine(34) in tRNA + AH2 + ATP = 2-thiouridine(34) in tRNA + L-cysteinyl-[protein] + A + AMP + diphosphate + H(+)</text>
        <dbReference type="Rhea" id="RHEA:47032"/>
        <dbReference type="Rhea" id="RHEA-COMP:10131"/>
        <dbReference type="Rhea" id="RHEA-COMP:11726"/>
        <dbReference type="Rhea" id="RHEA-COMP:11727"/>
        <dbReference type="Rhea" id="RHEA-COMP:11728"/>
        <dbReference type="ChEBI" id="CHEBI:13193"/>
        <dbReference type="ChEBI" id="CHEBI:15378"/>
        <dbReference type="ChEBI" id="CHEBI:17499"/>
        <dbReference type="ChEBI" id="CHEBI:29950"/>
        <dbReference type="ChEBI" id="CHEBI:30616"/>
        <dbReference type="ChEBI" id="CHEBI:33019"/>
        <dbReference type="ChEBI" id="CHEBI:61963"/>
        <dbReference type="ChEBI" id="CHEBI:65315"/>
        <dbReference type="ChEBI" id="CHEBI:87170"/>
        <dbReference type="ChEBI" id="CHEBI:456215"/>
        <dbReference type="EC" id="2.8.1.13"/>
    </reaction>
</comment>
<comment type="subcellular location">
    <subcellularLocation>
        <location evidence="1">Cytoplasm</location>
    </subcellularLocation>
</comment>
<comment type="similarity">
    <text evidence="1">Belongs to the MnmA/TRMU family.</text>
</comment>
<organism>
    <name type="scientific">Pseudoalteromonas translucida (strain TAC 125)</name>
    <dbReference type="NCBI Taxonomy" id="326442"/>
    <lineage>
        <taxon>Bacteria</taxon>
        <taxon>Pseudomonadati</taxon>
        <taxon>Pseudomonadota</taxon>
        <taxon>Gammaproteobacteria</taxon>
        <taxon>Alteromonadales</taxon>
        <taxon>Pseudoalteromonadaceae</taxon>
        <taxon>Pseudoalteromonas</taxon>
    </lineage>
</organism>
<keyword id="KW-0067">ATP-binding</keyword>
<keyword id="KW-0963">Cytoplasm</keyword>
<keyword id="KW-1015">Disulfide bond</keyword>
<keyword id="KW-0547">Nucleotide-binding</keyword>
<keyword id="KW-1185">Reference proteome</keyword>
<keyword id="KW-0694">RNA-binding</keyword>
<keyword id="KW-0808">Transferase</keyword>
<keyword id="KW-0819">tRNA processing</keyword>
<keyword id="KW-0820">tRNA-binding</keyword>
<gene>
    <name evidence="1" type="primary">mnmA</name>
    <name type="synonym">trmU</name>
    <name type="ordered locus">PSHAa1690</name>
</gene>
<proteinExistence type="inferred from homology"/>